<keyword id="KW-0007">Acetylation</keyword>
<keyword id="KW-0158">Chromosome</keyword>
<keyword id="KW-0238">DNA-binding</keyword>
<keyword id="KW-0544">Nucleosome core</keyword>
<keyword id="KW-0539">Nucleus</keyword>
<dbReference type="EMBL" id="M64838">
    <property type="status" value="NOT_ANNOTATED_CDS"/>
    <property type="molecule type" value="mRNA"/>
</dbReference>
<dbReference type="PIR" id="JQ1183">
    <property type="entry name" value="JQ1183"/>
</dbReference>
<dbReference type="RefSeq" id="NP_001413847.1">
    <property type="nucleotide sequence ID" value="NM_001426918.1"/>
</dbReference>
<dbReference type="SMR" id="P25470"/>
<dbReference type="EnsemblPlants" id="Psat5g283040.1">
    <property type="protein sequence ID" value="Psat5g283040.1.cds"/>
    <property type="gene ID" value="Psat5g283040"/>
</dbReference>
<dbReference type="EnsemblPlants" id="Psat5g283040.2">
    <property type="protein sequence ID" value="Psat5g283040.2.cds"/>
    <property type="gene ID" value="Psat5g283040"/>
</dbReference>
<dbReference type="GeneID" id="127087149"/>
<dbReference type="Gramene" id="Psat5g283040.1">
    <property type="protein sequence ID" value="Psat5g283040.1.cds"/>
    <property type="gene ID" value="Psat5g283040"/>
</dbReference>
<dbReference type="Gramene" id="Psat5g283040.2">
    <property type="protein sequence ID" value="Psat5g283040.2.cds"/>
    <property type="gene ID" value="Psat5g283040"/>
</dbReference>
<dbReference type="OrthoDB" id="9421954at2759"/>
<dbReference type="GO" id="GO:0000786">
    <property type="term" value="C:nucleosome"/>
    <property type="evidence" value="ECO:0007669"/>
    <property type="project" value="UniProtKB-KW"/>
</dbReference>
<dbReference type="GO" id="GO:0005634">
    <property type="term" value="C:nucleus"/>
    <property type="evidence" value="ECO:0007669"/>
    <property type="project" value="UniProtKB-SubCell"/>
</dbReference>
<dbReference type="GO" id="GO:0003677">
    <property type="term" value="F:DNA binding"/>
    <property type="evidence" value="ECO:0007669"/>
    <property type="project" value="UniProtKB-KW"/>
</dbReference>
<dbReference type="GO" id="GO:0046982">
    <property type="term" value="F:protein heterodimerization activity"/>
    <property type="evidence" value="ECO:0007669"/>
    <property type="project" value="InterPro"/>
</dbReference>
<dbReference type="GO" id="GO:0030527">
    <property type="term" value="F:structural constituent of chromatin"/>
    <property type="evidence" value="ECO:0007669"/>
    <property type="project" value="InterPro"/>
</dbReference>
<dbReference type="CDD" id="cd00074">
    <property type="entry name" value="HFD_H2A"/>
    <property type="match status" value="1"/>
</dbReference>
<dbReference type="FunFam" id="1.10.20.10:FF:000026">
    <property type="entry name" value="Histone H2A"/>
    <property type="match status" value="1"/>
</dbReference>
<dbReference type="Gene3D" id="1.10.20.10">
    <property type="entry name" value="Histone, subunit A"/>
    <property type="match status" value="1"/>
</dbReference>
<dbReference type="InterPro" id="IPR009072">
    <property type="entry name" value="Histone-fold"/>
</dbReference>
<dbReference type="InterPro" id="IPR002119">
    <property type="entry name" value="Histone_H2A"/>
</dbReference>
<dbReference type="InterPro" id="IPR007125">
    <property type="entry name" value="Histone_H2A/H2B/H3"/>
</dbReference>
<dbReference type="InterPro" id="IPR032454">
    <property type="entry name" value="Histone_H2A_C"/>
</dbReference>
<dbReference type="InterPro" id="IPR032458">
    <property type="entry name" value="Histone_H2A_CS"/>
</dbReference>
<dbReference type="PANTHER" id="PTHR23430">
    <property type="entry name" value="HISTONE H2A"/>
    <property type="match status" value="1"/>
</dbReference>
<dbReference type="Pfam" id="PF00125">
    <property type="entry name" value="Histone"/>
    <property type="match status" value="1"/>
</dbReference>
<dbReference type="Pfam" id="PF16211">
    <property type="entry name" value="Histone_H2A_C"/>
    <property type="match status" value="1"/>
</dbReference>
<dbReference type="PRINTS" id="PR00620">
    <property type="entry name" value="HISTONEH2A"/>
</dbReference>
<dbReference type="SMART" id="SM00414">
    <property type="entry name" value="H2A"/>
    <property type="match status" value="1"/>
</dbReference>
<dbReference type="SUPFAM" id="SSF47113">
    <property type="entry name" value="Histone-fold"/>
    <property type="match status" value="1"/>
</dbReference>
<dbReference type="PROSITE" id="PS00046">
    <property type="entry name" value="HISTONE_H2A"/>
    <property type="match status" value="1"/>
</dbReference>
<protein>
    <recommendedName>
        <fullName>Histone H2A.1</fullName>
    </recommendedName>
</protein>
<feature type="chain" id="PRO_0000055263" description="Histone H2A.1">
    <location>
        <begin position="1"/>
        <end position="150"/>
    </location>
</feature>
<feature type="region of interest" description="Disordered" evidence="2">
    <location>
        <begin position="1"/>
        <end position="26"/>
    </location>
</feature>
<feature type="region of interest" description="Disordered" evidence="2">
    <location>
        <begin position="128"/>
        <end position="150"/>
    </location>
</feature>
<feature type="short sequence motif" description="SPKK motif 1">
    <location>
        <begin position="139"/>
        <end position="142"/>
    </location>
</feature>
<feature type="short sequence motif" description="SPKK motif 2">
    <location>
        <begin position="146"/>
        <end position="149"/>
    </location>
</feature>
<feature type="compositionally biased region" description="Basic residues" evidence="2">
    <location>
        <begin position="1"/>
        <end position="24"/>
    </location>
</feature>
<feature type="compositionally biased region" description="Basic residues" evidence="2">
    <location>
        <begin position="141"/>
        <end position="150"/>
    </location>
</feature>
<feature type="modified residue" description="N-acetylmethionine" evidence="1">
    <location>
        <position position="1"/>
    </location>
</feature>
<sequence length="150" mass="15880">MDASTKTKKGAGGRKGGGPRKKSVTRSVRAGLQFPVGRVGRFLKKGRYAQRVGTGAPVYLAAVLEYLAAEVLELAGNAARDNKKNRISPRHLLLAVRNDEELGKLLAGVTIAYGGVLPNINPVLLPKRKENAAASTPKSPSKAKKSPKKA</sequence>
<evidence type="ECO:0000250" key="1"/>
<evidence type="ECO:0000256" key="2">
    <source>
        <dbReference type="SAM" id="MobiDB-lite"/>
    </source>
</evidence>
<evidence type="ECO:0000269" key="3">
    <source>
    </source>
</evidence>
<evidence type="ECO:0000269" key="4">
    <source>
    </source>
</evidence>
<evidence type="ECO:0000305" key="5"/>
<accession>P25470</accession>
<proteinExistence type="evidence at transcript level"/>
<comment type="function">
    <text>Core component of nucleosome. Nucleosomes wrap and compact DNA into chromatin, limiting DNA accessibility to the cellular machineries which require DNA as a template. Histones thereby play a central role in transcription regulation, DNA repair, DNA replication and chromosomal stability. DNA accessibility is regulated via a complex set of post-translational modifications of histones, also called histone code, and nucleosome remodeling.</text>
</comment>
<comment type="subunit">
    <text>The nucleosome is a histone octamer containing two molecules each of H2A, H2B, H3 and H4 assembled in one H3-H4 heterotetramer and two H2A-H2B heterodimers. The octamer wraps approximately 147 bp of DNA.</text>
</comment>
<comment type="subcellular location">
    <subcellularLocation>
        <location>Nucleus</location>
    </subcellularLocation>
    <subcellularLocation>
        <location>Chromosome</location>
    </subcellularLocation>
</comment>
<comment type="tissue specificity">
    <text evidence="3 4">High expression in root meristematic tissues, moderate in whole shoot and very low in mature leaves.</text>
</comment>
<comment type="developmental stage">
    <text evidence="3 4">Expressed during the late G1 phase and the major part of the S phase.</text>
</comment>
<comment type="domain">
    <text>Contains 2 SPKK motifs which may interact with the minor groove of A/T-rich DNA sites. Phosphorylation of this motif may regulate DNA binding. This motif is reiterated in both termini of histone H1 and in the N-terminus of sea urchin histones H2B, but its presence in the C-terminus seems to be unique to plant H2A.</text>
</comment>
<comment type="similarity">
    <text evidence="5">Belongs to the histone H2A family.</text>
</comment>
<organism>
    <name type="scientific">Pisum sativum</name>
    <name type="common">Garden pea</name>
    <name type="synonym">Lathyrus oleraceus</name>
    <dbReference type="NCBI Taxonomy" id="3888"/>
    <lineage>
        <taxon>Eukaryota</taxon>
        <taxon>Viridiplantae</taxon>
        <taxon>Streptophyta</taxon>
        <taxon>Embryophyta</taxon>
        <taxon>Tracheophyta</taxon>
        <taxon>Spermatophyta</taxon>
        <taxon>Magnoliopsida</taxon>
        <taxon>eudicotyledons</taxon>
        <taxon>Gunneridae</taxon>
        <taxon>Pentapetalae</taxon>
        <taxon>rosids</taxon>
        <taxon>fabids</taxon>
        <taxon>Fabales</taxon>
        <taxon>Fabaceae</taxon>
        <taxon>Papilionoideae</taxon>
        <taxon>50 kb inversion clade</taxon>
        <taxon>NPAAA clade</taxon>
        <taxon>Hologalegina</taxon>
        <taxon>IRL clade</taxon>
        <taxon>Fabeae</taxon>
        <taxon>Pisum</taxon>
    </lineage>
</organism>
<name>H2A1_PEA</name>
<reference key="1">
    <citation type="journal article" date="1991" name="Plant Cell">
        <title>Cell-specific expression of plant histone H2A genes.</title>
        <authorList>
            <person name="Koning A.J."/>
            <person name="Tanimoto E.Y."/>
            <person name="Kiehne K."/>
            <person name="Rost T."/>
            <person name="Comai L."/>
        </authorList>
    </citation>
    <scope>NUCLEOTIDE SEQUENCE [MRNA]</scope>
    <scope>DEVELOPMENTAL STAGE</scope>
    <scope>TISSUE SPECIFICITY</scope>
    <source>
        <strain>cv. Alaska</strain>
    </source>
</reference>
<reference key="2">
    <citation type="journal article" date="1993" name="Plant Physiol.">
        <title>DNA replication-dependent histone H2A mRNA expression in pea root tips.</title>
        <authorList>
            <person name="Tanimoto E.Y."/>
            <person name="Rost T.L."/>
            <person name="Comai L."/>
        </authorList>
    </citation>
    <scope>TISSUE SPECIFICITY</scope>
    <scope>DEVELOPMENTAL STAGE</scope>
</reference>